<keyword id="KW-0479">Metal-binding</keyword>
<keyword id="KW-1185">Reference proteome</keyword>
<keyword id="KW-0687">Ribonucleoprotein</keyword>
<keyword id="KW-0689">Ribosomal protein</keyword>
<keyword id="KW-0694">RNA-binding</keyword>
<keyword id="KW-0699">rRNA-binding</keyword>
<keyword id="KW-0862">Zinc</keyword>
<protein>
    <recommendedName>
        <fullName evidence="1">Small ribosomal subunit protein uS14</fullName>
    </recommendedName>
    <alternativeName>
        <fullName evidence="2">30S ribosomal protein S14 type Z</fullName>
    </alternativeName>
</protein>
<reference key="1">
    <citation type="journal article" date="2001" name="Nucleic Acids Res.">
        <title>The complete genome sequence of the murine respiratory pathogen Mycoplasma pulmonis.</title>
        <authorList>
            <person name="Chambaud I."/>
            <person name="Heilig R."/>
            <person name="Ferris S."/>
            <person name="Barbe V."/>
            <person name="Samson D."/>
            <person name="Galisson F."/>
            <person name="Moszer I."/>
            <person name="Dybvig K."/>
            <person name="Wroblewski H."/>
            <person name="Viari A."/>
            <person name="Rocha E.P.C."/>
            <person name="Blanchard A."/>
        </authorList>
    </citation>
    <scope>NUCLEOTIDE SEQUENCE [LARGE SCALE GENOMIC DNA]</scope>
    <source>
        <strain>UAB CTIP</strain>
    </source>
</reference>
<dbReference type="EMBL" id="AL445565">
    <property type="protein sequence ID" value="CAC13747.1"/>
    <property type="molecule type" value="Genomic_DNA"/>
</dbReference>
<dbReference type="PIR" id="F90583">
    <property type="entry name" value="F90583"/>
</dbReference>
<dbReference type="RefSeq" id="WP_010925375.1">
    <property type="nucleotide sequence ID" value="NC_002771.1"/>
</dbReference>
<dbReference type="SMR" id="Q98PZ5"/>
<dbReference type="STRING" id="272635.gene:17577181"/>
<dbReference type="KEGG" id="mpu:MYPU_5740"/>
<dbReference type="eggNOG" id="COG0199">
    <property type="taxonomic scope" value="Bacteria"/>
</dbReference>
<dbReference type="HOGENOM" id="CLU_139869_3_0_14"/>
<dbReference type="BioCyc" id="MPUL272635:G1GT6-587-MONOMER"/>
<dbReference type="Proteomes" id="UP000000528">
    <property type="component" value="Chromosome"/>
</dbReference>
<dbReference type="GO" id="GO:0005737">
    <property type="term" value="C:cytoplasm"/>
    <property type="evidence" value="ECO:0007669"/>
    <property type="project" value="UniProtKB-ARBA"/>
</dbReference>
<dbReference type="GO" id="GO:0015935">
    <property type="term" value="C:small ribosomal subunit"/>
    <property type="evidence" value="ECO:0007669"/>
    <property type="project" value="TreeGrafter"/>
</dbReference>
<dbReference type="GO" id="GO:0019843">
    <property type="term" value="F:rRNA binding"/>
    <property type="evidence" value="ECO:0007669"/>
    <property type="project" value="UniProtKB-UniRule"/>
</dbReference>
<dbReference type="GO" id="GO:0003735">
    <property type="term" value="F:structural constituent of ribosome"/>
    <property type="evidence" value="ECO:0007669"/>
    <property type="project" value="InterPro"/>
</dbReference>
<dbReference type="GO" id="GO:0008270">
    <property type="term" value="F:zinc ion binding"/>
    <property type="evidence" value="ECO:0007669"/>
    <property type="project" value="UniProtKB-UniRule"/>
</dbReference>
<dbReference type="GO" id="GO:0006412">
    <property type="term" value="P:translation"/>
    <property type="evidence" value="ECO:0007669"/>
    <property type="project" value="UniProtKB-UniRule"/>
</dbReference>
<dbReference type="FunFam" id="4.10.830.10:FF:000001">
    <property type="entry name" value="30S ribosomal protein S14 type Z"/>
    <property type="match status" value="1"/>
</dbReference>
<dbReference type="Gene3D" id="4.10.830.10">
    <property type="entry name" value="30s Ribosomal Protein S14, Chain N"/>
    <property type="match status" value="1"/>
</dbReference>
<dbReference type="HAMAP" id="MF_01364_B">
    <property type="entry name" value="Ribosomal_uS14_2_B"/>
    <property type="match status" value="1"/>
</dbReference>
<dbReference type="InterPro" id="IPR001209">
    <property type="entry name" value="Ribosomal_uS14"/>
</dbReference>
<dbReference type="InterPro" id="IPR023053">
    <property type="entry name" value="Ribosomal_uS14_bact"/>
</dbReference>
<dbReference type="InterPro" id="IPR018271">
    <property type="entry name" value="Ribosomal_uS14_CS"/>
</dbReference>
<dbReference type="InterPro" id="IPR043140">
    <property type="entry name" value="Ribosomal_uS14_sf"/>
</dbReference>
<dbReference type="NCBIfam" id="NF005974">
    <property type="entry name" value="PRK08061.1"/>
    <property type="match status" value="1"/>
</dbReference>
<dbReference type="PANTHER" id="PTHR19836">
    <property type="entry name" value="30S RIBOSOMAL PROTEIN S14"/>
    <property type="match status" value="1"/>
</dbReference>
<dbReference type="PANTHER" id="PTHR19836:SF19">
    <property type="entry name" value="SMALL RIBOSOMAL SUBUNIT PROTEIN US14M"/>
    <property type="match status" value="1"/>
</dbReference>
<dbReference type="Pfam" id="PF00253">
    <property type="entry name" value="Ribosomal_S14"/>
    <property type="match status" value="1"/>
</dbReference>
<dbReference type="SUPFAM" id="SSF57716">
    <property type="entry name" value="Glucocorticoid receptor-like (DNA-binding domain)"/>
    <property type="match status" value="1"/>
</dbReference>
<dbReference type="PROSITE" id="PS00527">
    <property type="entry name" value="RIBOSOMAL_S14"/>
    <property type="match status" value="1"/>
</dbReference>
<name>RS14Z_MYCPU</name>
<proteinExistence type="inferred from homology"/>
<sequence>MAKKSLKVKAARVAKFSTRAYTRCQLCGRPHAVLRKFEICRICFRKLAHEGKIPGLKKASW</sequence>
<accession>Q98PZ5</accession>
<gene>
    <name evidence="1" type="primary">rpsZ</name>
    <name evidence="1" type="synonym">rpsN</name>
    <name type="ordered locus">MYPU_5740</name>
</gene>
<feature type="chain" id="PRO_0000130909" description="Small ribosomal subunit protein uS14">
    <location>
        <begin position="1"/>
        <end position="61"/>
    </location>
</feature>
<feature type="binding site" evidence="1">
    <location>
        <position position="24"/>
    </location>
    <ligand>
        <name>Zn(2+)</name>
        <dbReference type="ChEBI" id="CHEBI:29105"/>
    </ligand>
</feature>
<feature type="binding site" evidence="1">
    <location>
        <position position="27"/>
    </location>
    <ligand>
        <name>Zn(2+)</name>
        <dbReference type="ChEBI" id="CHEBI:29105"/>
    </ligand>
</feature>
<feature type="binding site" evidence="1">
    <location>
        <position position="40"/>
    </location>
    <ligand>
        <name>Zn(2+)</name>
        <dbReference type="ChEBI" id="CHEBI:29105"/>
    </ligand>
</feature>
<feature type="binding site" evidence="1">
    <location>
        <position position="43"/>
    </location>
    <ligand>
        <name>Zn(2+)</name>
        <dbReference type="ChEBI" id="CHEBI:29105"/>
    </ligand>
</feature>
<organism>
    <name type="scientific">Mycoplasmopsis pulmonis (strain UAB CTIP)</name>
    <name type="common">Mycoplasma pulmonis</name>
    <dbReference type="NCBI Taxonomy" id="272635"/>
    <lineage>
        <taxon>Bacteria</taxon>
        <taxon>Bacillati</taxon>
        <taxon>Mycoplasmatota</taxon>
        <taxon>Mycoplasmoidales</taxon>
        <taxon>Metamycoplasmataceae</taxon>
        <taxon>Mycoplasmopsis</taxon>
    </lineage>
</organism>
<evidence type="ECO:0000255" key="1">
    <source>
        <dbReference type="HAMAP-Rule" id="MF_01364"/>
    </source>
</evidence>
<evidence type="ECO:0000305" key="2"/>
<comment type="function">
    <text evidence="1">Binds 16S rRNA, required for the assembly of 30S particles and may also be responsible for determining the conformation of the 16S rRNA at the A site.</text>
</comment>
<comment type="cofactor">
    <cofactor evidence="1">
        <name>Zn(2+)</name>
        <dbReference type="ChEBI" id="CHEBI:29105"/>
    </cofactor>
    <text evidence="1">Binds 1 zinc ion per subunit.</text>
</comment>
<comment type="subunit">
    <text evidence="1">Part of the 30S ribosomal subunit. Contacts proteins S3 and S10.</text>
</comment>
<comment type="similarity">
    <text evidence="1">Belongs to the universal ribosomal protein uS14 family. Zinc-binding uS14 subfamily.</text>
</comment>